<reference key="1">
    <citation type="submission" date="2006-08" db="EMBL/GenBank/DDBJ databases">
        <title>Complete sequence of Maricaulis maris MCS10.</title>
        <authorList>
            <consortium name="US DOE Joint Genome Institute"/>
            <person name="Copeland A."/>
            <person name="Lucas S."/>
            <person name="Lapidus A."/>
            <person name="Barry K."/>
            <person name="Detter J.C."/>
            <person name="Glavina del Rio T."/>
            <person name="Hammon N."/>
            <person name="Israni S."/>
            <person name="Dalin E."/>
            <person name="Tice H."/>
            <person name="Pitluck S."/>
            <person name="Saunders E."/>
            <person name="Brettin T."/>
            <person name="Bruce D."/>
            <person name="Han C."/>
            <person name="Tapia R."/>
            <person name="Gilna P."/>
            <person name="Schmutz J."/>
            <person name="Larimer F."/>
            <person name="Land M."/>
            <person name="Hauser L."/>
            <person name="Kyrpides N."/>
            <person name="Mikhailova N."/>
            <person name="Viollier P."/>
            <person name="Stephens C."/>
            <person name="Richardson P."/>
        </authorList>
    </citation>
    <scope>NUCLEOTIDE SEQUENCE [LARGE SCALE GENOMIC DNA]</scope>
    <source>
        <strain>MCS10</strain>
    </source>
</reference>
<evidence type="ECO:0000255" key="1">
    <source>
        <dbReference type="HAMAP-Rule" id="MF_00703"/>
    </source>
</evidence>
<keyword id="KW-0328">Glycosyltransferase</keyword>
<keyword id="KW-1185">Reference proteome</keyword>
<keyword id="KW-0808">Transferase</keyword>
<sequence length="519" mass="55091">MTKMIDISAMPAELSEKNTLTARRLGIDTHEHAVIYMRADCHICRAEGFNNHARIKVSGPSNKAIIATLNLVVTDLLSPGQIGLSETAWLRLQLNEGDPVRLIHPAPLLSLSAVRAKIFGEPLDQNNLDAIVGDIAAGRFSDIHLSAFLTASAAHEQSFEEIRDLTLSMVNVGQRLDWGRAPIVDKHCVGGLPGNRTTPIVVAICVAAGLTMPKTSSRAITSPAGTADTMETLAPVELDVSAMRRVVETVGGCIVWGGAVALSPVDDTLIRIERALDIDSDGQLVASVLSKKIAAGATHLVIDMPVGPTAKVRTEEAAARLEGLFARVGSNLGLNLKIMRTDGSQPVGRGIGPALEAWDVLAVLNNEGHNVPDLTVQATLLAGELLEMGQAAPAGRGAELATELLVNGRAWRAFEAICEAQGGFREPPTAPHYQVIQSPRDGVVGRIDNRRLAKAAKLAGAPASKAAGIVLHAKLGSQMVKGQPLYSLHSQSLGELSYAHDYLASQPEIIEIEEEQCPR</sequence>
<proteinExistence type="inferred from homology"/>
<accession>Q0ATA0</accession>
<feature type="chain" id="PRO_0000314701" description="Putative thymidine phosphorylase">
    <location>
        <begin position="1"/>
        <end position="519"/>
    </location>
</feature>
<organism>
    <name type="scientific">Maricaulis maris (strain MCS10)</name>
    <name type="common">Caulobacter maris</name>
    <dbReference type="NCBI Taxonomy" id="394221"/>
    <lineage>
        <taxon>Bacteria</taxon>
        <taxon>Pseudomonadati</taxon>
        <taxon>Pseudomonadota</taxon>
        <taxon>Alphaproteobacteria</taxon>
        <taxon>Maricaulales</taxon>
        <taxon>Maricaulaceae</taxon>
        <taxon>Maricaulis</taxon>
    </lineage>
</organism>
<dbReference type="EC" id="2.4.2.4" evidence="1"/>
<dbReference type="EMBL" id="CP000449">
    <property type="protein sequence ID" value="ABI64487.1"/>
    <property type="molecule type" value="Genomic_DNA"/>
</dbReference>
<dbReference type="RefSeq" id="WP_011642134.1">
    <property type="nucleotide sequence ID" value="NC_008347.1"/>
</dbReference>
<dbReference type="SMR" id="Q0ATA0"/>
<dbReference type="STRING" id="394221.Mmar10_0191"/>
<dbReference type="KEGG" id="mmr:Mmar10_0191"/>
<dbReference type="eggNOG" id="COG0213">
    <property type="taxonomic scope" value="Bacteria"/>
</dbReference>
<dbReference type="HOGENOM" id="CLU_025040_6_0_5"/>
<dbReference type="OrthoDB" id="341217at2"/>
<dbReference type="Proteomes" id="UP000001964">
    <property type="component" value="Chromosome"/>
</dbReference>
<dbReference type="GO" id="GO:0005829">
    <property type="term" value="C:cytosol"/>
    <property type="evidence" value="ECO:0007669"/>
    <property type="project" value="TreeGrafter"/>
</dbReference>
<dbReference type="GO" id="GO:0004645">
    <property type="term" value="F:1,4-alpha-oligoglucan phosphorylase activity"/>
    <property type="evidence" value="ECO:0007669"/>
    <property type="project" value="InterPro"/>
</dbReference>
<dbReference type="GO" id="GO:0009032">
    <property type="term" value="F:thymidine phosphorylase activity"/>
    <property type="evidence" value="ECO:0007669"/>
    <property type="project" value="UniProtKB-UniRule"/>
</dbReference>
<dbReference type="GO" id="GO:0006206">
    <property type="term" value="P:pyrimidine nucleobase metabolic process"/>
    <property type="evidence" value="ECO:0007669"/>
    <property type="project" value="InterPro"/>
</dbReference>
<dbReference type="GO" id="GO:0006213">
    <property type="term" value="P:pyrimidine nucleoside metabolic process"/>
    <property type="evidence" value="ECO:0007669"/>
    <property type="project" value="InterPro"/>
</dbReference>
<dbReference type="Gene3D" id="1.20.970.50">
    <property type="match status" value="1"/>
</dbReference>
<dbReference type="Gene3D" id="3.40.1030.10">
    <property type="entry name" value="Nucleoside phosphorylase/phosphoribosyltransferase catalytic domain"/>
    <property type="match status" value="1"/>
</dbReference>
<dbReference type="Gene3D" id="3.90.1170.30">
    <property type="entry name" value="Pyrimidine nucleoside phosphorylase-like, C-terminal domain"/>
    <property type="match status" value="1"/>
</dbReference>
<dbReference type="HAMAP" id="MF_00703">
    <property type="entry name" value="Thymid_phosp_2"/>
    <property type="match status" value="1"/>
</dbReference>
<dbReference type="InterPro" id="IPR000312">
    <property type="entry name" value="Glycosyl_Trfase_fam3"/>
</dbReference>
<dbReference type="InterPro" id="IPR017459">
    <property type="entry name" value="Glycosyl_Trfase_fam3_N_dom"/>
</dbReference>
<dbReference type="InterPro" id="IPR036320">
    <property type="entry name" value="Glycosyl_Trfase_fam3_N_dom_sf"/>
</dbReference>
<dbReference type="InterPro" id="IPR035902">
    <property type="entry name" value="Nuc_phospho_transferase"/>
</dbReference>
<dbReference type="InterPro" id="IPR036566">
    <property type="entry name" value="PYNP-like_C_sf"/>
</dbReference>
<dbReference type="InterPro" id="IPR013102">
    <property type="entry name" value="PYNP_C"/>
</dbReference>
<dbReference type="InterPro" id="IPR017872">
    <property type="entry name" value="Pyrmidine_PPase_CS"/>
</dbReference>
<dbReference type="InterPro" id="IPR028579">
    <property type="entry name" value="Thym_Pase_Put"/>
</dbReference>
<dbReference type="InterPro" id="IPR013466">
    <property type="entry name" value="Thymidine/AMP_Pase"/>
</dbReference>
<dbReference type="InterPro" id="IPR000053">
    <property type="entry name" value="Thymidine/pyrmidine_PPase"/>
</dbReference>
<dbReference type="NCBIfam" id="TIGR02645">
    <property type="entry name" value="ARCH_P_rylase"/>
    <property type="match status" value="1"/>
</dbReference>
<dbReference type="NCBIfam" id="NF003338">
    <property type="entry name" value="PRK04350.1"/>
    <property type="match status" value="1"/>
</dbReference>
<dbReference type="PANTHER" id="PTHR10515">
    <property type="entry name" value="THYMIDINE PHOSPHORYLASE"/>
    <property type="match status" value="1"/>
</dbReference>
<dbReference type="PANTHER" id="PTHR10515:SF0">
    <property type="entry name" value="THYMIDINE PHOSPHORYLASE"/>
    <property type="match status" value="1"/>
</dbReference>
<dbReference type="Pfam" id="PF02885">
    <property type="entry name" value="Glycos_trans_3N"/>
    <property type="match status" value="1"/>
</dbReference>
<dbReference type="Pfam" id="PF00591">
    <property type="entry name" value="Glycos_transf_3"/>
    <property type="match status" value="1"/>
</dbReference>
<dbReference type="Pfam" id="PF07831">
    <property type="entry name" value="PYNP_C"/>
    <property type="match status" value="1"/>
</dbReference>
<dbReference type="SMART" id="SM00941">
    <property type="entry name" value="PYNP_C"/>
    <property type="match status" value="1"/>
</dbReference>
<dbReference type="SUPFAM" id="SSF52418">
    <property type="entry name" value="Nucleoside phosphorylase/phosphoribosyltransferase catalytic domain"/>
    <property type="match status" value="1"/>
</dbReference>
<dbReference type="SUPFAM" id="SSF47648">
    <property type="entry name" value="Nucleoside phosphorylase/phosphoribosyltransferase N-terminal domain"/>
    <property type="match status" value="1"/>
</dbReference>
<dbReference type="SUPFAM" id="SSF54680">
    <property type="entry name" value="Pyrimidine nucleoside phosphorylase C-terminal domain"/>
    <property type="match status" value="1"/>
</dbReference>
<dbReference type="PROSITE" id="PS00647">
    <property type="entry name" value="THYMID_PHOSPHORYLASE"/>
    <property type="match status" value="1"/>
</dbReference>
<gene>
    <name type="ordered locus">Mmar10_0191</name>
</gene>
<protein>
    <recommendedName>
        <fullName evidence="1">Putative thymidine phosphorylase</fullName>
        <ecNumber evidence="1">2.4.2.4</ecNumber>
    </recommendedName>
    <alternativeName>
        <fullName evidence="1">TdRPase</fullName>
    </alternativeName>
</protein>
<name>TYPH_MARMM</name>
<comment type="catalytic activity">
    <reaction evidence="1">
        <text>thymidine + phosphate = 2-deoxy-alpha-D-ribose 1-phosphate + thymine</text>
        <dbReference type="Rhea" id="RHEA:16037"/>
        <dbReference type="ChEBI" id="CHEBI:17748"/>
        <dbReference type="ChEBI" id="CHEBI:17821"/>
        <dbReference type="ChEBI" id="CHEBI:43474"/>
        <dbReference type="ChEBI" id="CHEBI:57259"/>
        <dbReference type="EC" id="2.4.2.4"/>
    </reaction>
</comment>
<comment type="similarity">
    <text evidence="1">Belongs to the thymidine/pyrimidine-nucleoside phosphorylase family. Type 2 subfamily.</text>
</comment>